<name>AATE_PYRFU</name>
<gene>
    <name evidence="1" type="primary">atpE</name>
    <name type="ordered locus">PF0179</name>
</gene>
<proteinExistence type="inferred from homology"/>
<comment type="function">
    <text evidence="1">Component of the A-type ATP synthase that produces ATP from ADP in the presence of a proton gradient across the membrane.</text>
</comment>
<comment type="subunit">
    <text evidence="1">Has multiple subunits with at least A(3), B(3), C, D, E, F, H, I and proteolipid K(x).</text>
</comment>
<comment type="subcellular location">
    <subcellularLocation>
        <location evidence="1">Cell membrane</location>
        <topology evidence="1">Peripheral membrane protein</topology>
    </subcellularLocation>
</comment>
<comment type="similarity">
    <text evidence="1">Belongs to the V-ATPase E subunit family.</text>
</comment>
<reference key="1">
    <citation type="journal article" date="1999" name="Genetics">
        <title>Divergence of the hyperthermophilic archaea Pyrococcus furiosus and P. horikoshii inferred from complete genomic sequences.</title>
        <authorList>
            <person name="Maeder D.L."/>
            <person name="Weiss R.B."/>
            <person name="Dunn D.M."/>
            <person name="Cherry J.L."/>
            <person name="Gonzalez J.M."/>
            <person name="DiRuggiero J."/>
            <person name="Robb F.T."/>
        </authorList>
    </citation>
    <scope>NUCLEOTIDE SEQUENCE [LARGE SCALE GENOMIC DNA]</scope>
    <source>
        <strain>ATCC 43587 / DSM 3638 / JCM 8422 / Vc1</strain>
    </source>
</reference>
<accession>Q8U4A9</accession>
<evidence type="ECO:0000255" key="1">
    <source>
        <dbReference type="HAMAP-Rule" id="MF_00311"/>
    </source>
</evidence>
<feature type="chain" id="PRO_0000117321" description="A-type ATP synthase subunit E">
    <location>
        <begin position="1"/>
        <end position="198"/>
    </location>
</feature>
<sequence>MNGAQVIIQEINREAEQKIKYILDEARKEAEKIKEEARKRGESRAEWILRKAKTQAELEKQRIIATARLEVRRKKLSLQEEYISRVLKEVTSRLSNLSEDEYLETVLALLKEALKELDVKEIRVHSNEKTLALISSRIEEIRRELGDVSIEIGSPIQTIGGVIVETKDGNMRVDNTFEARMARLESELRSKIAEILFG</sequence>
<keyword id="KW-0066">ATP synthesis</keyword>
<keyword id="KW-1003">Cell membrane</keyword>
<keyword id="KW-0375">Hydrogen ion transport</keyword>
<keyword id="KW-0406">Ion transport</keyword>
<keyword id="KW-0472">Membrane</keyword>
<keyword id="KW-1185">Reference proteome</keyword>
<keyword id="KW-0813">Transport</keyword>
<organism>
    <name type="scientific">Pyrococcus furiosus (strain ATCC 43587 / DSM 3638 / JCM 8422 / Vc1)</name>
    <dbReference type="NCBI Taxonomy" id="186497"/>
    <lineage>
        <taxon>Archaea</taxon>
        <taxon>Methanobacteriati</taxon>
        <taxon>Methanobacteriota</taxon>
        <taxon>Thermococci</taxon>
        <taxon>Thermococcales</taxon>
        <taxon>Thermococcaceae</taxon>
        <taxon>Pyrococcus</taxon>
    </lineage>
</organism>
<dbReference type="EMBL" id="AE009950">
    <property type="protein sequence ID" value="AAL80303.1"/>
    <property type="molecule type" value="Genomic_DNA"/>
</dbReference>
<dbReference type="RefSeq" id="WP_048059026.1">
    <property type="nucleotide sequence ID" value="NC_003413.1"/>
</dbReference>
<dbReference type="SMR" id="Q8U4A9"/>
<dbReference type="STRING" id="186497.PF0179"/>
<dbReference type="PaxDb" id="186497-PF0179"/>
<dbReference type="GeneID" id="1468011"/>
<dbReference type="KEGG" id="pfu:PF0179"/>
<dbReference type="PATRIC" id="fig|186497.12.peg.186"/>
<dbReference type="eggNOG" id="arCOG00869">
    <property type="taxonomic scope" value="Archaea"/>
</dbReference>
<dbReference type="HOGENOM" id="CLU_105846_1_0_2"/>
<dbReference type="OrthoDB" id="4691at2157"/>
<dbReference type="PhylomeDB" id="Q8U4A9"/>
<dbReference type="Proteomes" id="UP000001013">
    <property type="component" value="Chromosome"/>
</dbReference>
<dbReference type="GO" id="GO:0005886">
    <property type="term" value="C:plasma membrane"/>
    <property type="evidence" value="ECO:0007669"/>
    <property type="project" value="UniProtKB-SubCell"/>
</dbReference>
<dbReference type="GO" id="GO:0033178">
    <property type="term" value="C:proton-transporting two-sector ATPase complex, catalytic domain"/>
    <property type="evidence" value="ECO:0007669"/>
    <property type="project" value="InterPro"/>
</dbReference>
<dbReference type="GO" id="GO:0005524">
    <property type="term" value="F:ATP binding"/>
    <property type="evidence" value="ECO:0007669"/>
    <property type="project" value="UniProtKB-UniRule"/>
</dbReference>
<dbReference type="GO" id="GO:0046933">
    <property type="term" value="F:proton-transporting ATP synthase activity, rotational mechanism"/>
    <property type="evidence" value="ECO:0007669"/>
    <property type="project" value="UniProtKB-UniRule"/>
</dbReference>
<dbReference type="GO" id="GO:0046961">
    <property type="term" value="F:proton-transporting ATPase activity, rotational mechanism"/>
    <property type="evidence" value="ECO:0007669"/>
    <property type="project" value="InterPro"/>
</dbReference>
<dbReference type="GO" id="GO:0042777">
    <property type="term" value="P:proton motive force-driven plasma membrane ATP synthesis"/>
    <property type="evidence" value="ECO:0007669"/>
    <property type="project" value="UniProtKB-UniRule"/>
</dbReference>
<dbReference type="Gene3D" id="3.30.2320.30">
    <property type="entry name" value="ATP synthase, E subunit, C-terminal"/>
    <property type="match status" value="1"/>
</dbReference>
<dbReference type="Gene3D" id="1.20.5.620">
    <property type="entry name" value="F1F0 ATP synthase subunit B, membrane domain"/>
    <property type="match status" value="1"/>
</dbReference>
<dbReference type="HAMAP" id="MF_00311">
    <property type="entry name" value="ATP_synth_E_arch"/>
    <property type="match status" value="1"/>
</dbReference>
<dbReference type="InterPro" id="IPR028987">
    <property type="entry name" value="ATP_synth_B-like_membr_sf"/>
</dbReference>
<dbReference type="InterPro" id="IPR038495">
    <property type="entry name" value="ATPase_E_C"/>
</dbReference>
<dbReference type="InterPro" id="IPR002842">
    <property type="entry name" value="ATPase_V1_Esu"/>
</dbReference>
<dbReference type="NCBIfam" id="NF003049">
    <property type="entry name" value="PRK03963.1"/>
    <property type="match status" value="1"/>
</dbReference>
<dbReference type="PANTHER" id="PTHR45715">
    <property type="entry name" value="ATPASE H+-TRANSPORTING V1 SUBUNIT E1A-RELATED"/>
    <property type="match status" value="1"/>
</dbReference>
<dbReference type="Pfam" id="PF01991">
    <property type="entry name" value="vATP-synt_E"/>
    <property type="match status" value="1"/>
</dbReference>
<dbReference type="SUPFAM" id="SSF81573">
    <property type="entry name" value="F1F0 ATP synthase subunit B, membrane domain"/>
    <property type="match status" value="1"/>
</dbReference>
<dbReference type="SUPFAM" id="SSF160527">
    <property type="entry name" value="V-type ATPase subunit E-like"/>
    <property type="match status" value="1"/>
</dbReference>
<protein>
    <recommendedName>
        <fullName evidence="1">A-type ATP synthase subunit E</fullName>
    </recommendedName>
</protein>